<evidence type="ECO:0000255" key="1">
    <source>
        <dbReference type="HAMAP-Rule" id="MF_01007"/>
    </source>
</evidence>
<organism>
    <name type="scientific">Bacillus cereus (strain AH820)</name>
    <dbReference type="NCBI Taxonomy" id="405535"/>
    <lineage>
        <taxon>Bacteria</taxon>
        <taxon>Bacillati</taxon>
        <taxon>Bacillota</taxon>
        <taxon>Bacilli</taxon>
        <taxon>Bacillales</taxon>
        <taxon>Bacillaceae</taxon>
        <taxon>Bacillus</taxon>
        <taxon>Bacillus cereus group</taxon>
    </lineage>
</organism>
<name>RSMH_BACC0</name>
<dbReference type="EC" id="2.1.1.199" evidence="1"/>
<dbReference type="EMBL" id="CP001283">
    <property type="protein sequence ID" value="ACK90382.1"/>
    <property type="molecule type" value="Genomic_DNA"/>
</dbReference>
<dbReference type="RefSeq" id="WP_000481786.1">
    <property type="nucleotide sequence ID" value="NC_011773.1"/>
</dbReference>
<dbReference type="SMR" id="B7JK06"/>
<dbReference type="GeneID" id="45023747"/>
<dbReference type="KEGG" id="bcu:BCAH820_3933"/>
<dbReference type="HOGENOM" id="CLU_038422_2_0_9"/>
<dbReference type="Proteomes" id="UP000001363">
    <property type="component" value="Chromosome"/>
</dbReference>
<dbReference type="GO" id="GO:0005737">
    <property type="term" value="C:cytoplasm"/>
    <property type="evidence" value="ECO:0007669"/>
    <property type="project" value="UniProtKB-SubCell"/>
</dbReference>
<dbReference type="GO" id="GO:0071424">
    <property type="term" value="F:rRNA (cytosine-N4-)-methyltransferase activity"/>
    <property type="evidence" value="ECO:0007669"/>
    <property type="project" value="UniProtKB-UniRule"/>
</dbReference>
<dbReference type="GO" id="GO:0070475">
    <property type="term" value="P:rRNA base methylation"/>
    <property type="evidence" value="ECO:0007669"/>
    <property type="project" value="UniProtKB-UniRule"/>
</dbReference>
<dbReference type="FunFam" id="1.10.150.170:FF:000001">
    <property type="entry name" value="Ribosomal RNA small subunit methyltransferase H"/>
    <property type="match status" value="1"/>
</dbReference>
<dbReference type="Gene3D" id="1.10.150.170">
    <property type="entry name" value="Putative methyltransferase TM0872, insert domain"/>
    <property type="match status" value="1"/>
</dbReference>
<dbReference type="Gene3D" id="3.40.50.150">
    <property type="entry name" value="Vaccinia Virus protein VP39"/>
    <property type="match status" value="1"/>
</dbReference>
<dbReference type="HAMAP" id="MF_01007">
    <property type="entry name" value="16SrRNA_methyltr_H"/>
    <property type="match status" value="1"/>
</dbReference>
<dbReference type="InterPro" id="IPR002903">
    <property type="entry name" value="RsmH"/>
</dbReference>
<dbReference type="InterPro" id="IPR023397">
    <property type="entry name" value="SAM-dep_MeTrfase_MraW_recog"/>
</dbReference>
<dbReference type="InterPro" id="IPR029063">
    <property type="entry name" value="SAM-dependent_MTases_sf"/>
</dbReference>
<dbReference type="NCBIfam" id="TIGR00006">
    <property type="entry name" value="16S rRNA (cytosine(1402)-N(4))-methyltransferase RsmH"/>
    <property type="match status" value="1"/>
</dbReference>
<dbReference type="PANTHER" id="PTHR11265:SF0">
    <property type="entry name" value="12S RRNA N4-METHYLCYTIDINE METHYLTRANSFERASE"/>
    <property type="match status" value="1"/>
</dbReference>
<dbReference type="PANTHER" id="PTHR11265">
    <property type="entry name" value="S-ADENOSYL-METHYLTRANSFERASE MRAW"/>
    <property type="match status" value="1"/>
</dbReference>
<dbReference type="Pfam" id="PF01795">
    <property type="entry name" value="Methyltransf_5"/>
    <property type="match status" value="1"/>
</dbReference>
<dbReference type="PIRSF" id="PIRSF004486">
    <property type="entry name" value="MraW"/>
    <property type="match status" value="1"/>
</dbReference>
<dbReference type="SUPFAM" id="SSF81799">
    <property type="entry name" value="Putative methyltransferase TM0872, insert domain"/>
    <property type="match status" value="1"/>
</dbReference>
<dbReference type="SUPFAM" id="SSF53335">
    <property type="entry name" value="S-adenosyl-L-methionine-dependent methyltransferases"/>
    <property type="match status" value="1"/>
</dbReference>
<proteinExistence type="inferred from homology"/>
<keyword id="KW-0963">Cytoplasm</keyword>
<keyword id="KW-0489">Methyltransferase</keyword>
<keyword id="KW-0698">rRNA processing</keyword>
<keyword id="KW-0949">S-adenosyl-L-methionine</keyword>
<keyword id="KW-0808">Transferase</keyword>
<protein>
    <recommendedName>
        <fullName evidence="1">Ribosomal RNA small subunit methyltransferase H</fullName>
        <ecNumber evidence="1">2.1.1.199</ecNumber>
    </recommendedName>
    <alternativeName>
        <fullName evidence="1">16S rRNA m(4)C1402 methyltransferase</fullName>
    </alternativeName>
    <alternativeName>
        <fullName evidence="1">rRNA (cytosine-N(4)-)-methyltransferase RsmH</fullName>
    </alternativeName>
</protein>
<reference key="1">
    <citation type="submission" date="2008-10" db="EMBL/GenBank/DDBJ databases">
        <title>Genome sequence of Bacillus cereus AH820.</title>
        <authorList>
            <person name="Dodson R.J."/>
            <person name="Durkin A.S."/>
            <person name="Rosovitz M.J."/>
            <person name="Rasko D.A."/>
            <person name="Hoffmaster A."/>
            <person name="Ravel J."/>
            <person name="Sutton G."/>
        </authorList>
    </citation>
    <scope>NUCLEOTIDE SEQUENCE [LARGE SCALE GENOMIC DNA]</scope>
    <source>
        <strain>AH820</strain>
    </source>
</reference>
<gene>
    <name evidence="1" type="primary">rsmH</name>
    <name type="synonym">mraW</name>
    <name type="ordered locus">BCAH820_3933</name>
</gene>
<accession>B7JK06</accession>
<sequence>MFNHVTVLLKETVDGLDIKPDGTYVDCTLGGGGHSSYLLSQLTEGGRLIAFDQDEIAIQNAKEKFSSYGEQFITVKSNFRYLSEKLQELGITEVDGILFDLGVSSPQLDTPERGFSYHHDAPLDMRMDQDAPLTAYDVVNSWSYEQLVRIFFQYGEEKFSKQIARKIEAYRENKAIETTGELVELIKEGIPAPARRTGGHPAKRVFQAIRIAVNDELKVFEEALESAIEMVKPGGRVSVITFHSLEDRICKTTFKRNSTTPQLPPGLPIIPDEFKPKLKLITRKPILPSDIELEENNRARSAKLRIAEKR</sequence>
<feature type="chain" id="PRO_0000386730" description="Ribosomal RNA small subunit methyltransferase H">
    <location>
        <begin position="1"/>
        <end position="310"/>
    </location>
</feature>
<feature type="binding site" evidence="1">
    <location>
        <begin position="32"/>
        <end position="34"/>
    </location>
    <ligand>
        <name>S-adenosyl-L-methionine</name>
        <dbReference type="ChEBI" id="CHEBI:59789"/>
    </ligand>
</feature>
<feature type="binding site" evidence="1">
    <location>
        <position position="52"/>
    </location>
    <ligand>
        <name>S-adenosyl-L-methionine</name>
        <dbReference type="ChEBI" id="CHEBI:59789"/>
    </ligand>
</feature>
<feature type="binding site" evidence="1">
    <location>
        <position position="79"/>
    </location>
    <ligand>
        <name>S-adenosyl-L-methionine</name>
        <dbReference type="ChEBI" id="CHEBI:59789"/>
    </ligand>
</feature>
<feature type="binding site" evidence="1">
    <location>
        <position position="100"/>
    </location>
    <ligand>
        <name>S-adenosyl-L-methionine</name>
        <dbReference type="ChEBI" id="CHEBI:59789"/>
    </ligand>
</feature>
<feature type="binding site" evidence="1">
    <location>
        <position position="107"/>
    </location>
    <ligand>
        <name>S-adenosyl-L-methionine</name>
        <dbReference type="ChEBI" id="CHEBI:59789"/>
    </ligand>
</feature>
<comment type="function">
    <text evidence="1">Specifically methylates the N4 position of cytidine in position 1402 (C1402) of 16S rRNA.</text>
</comment>
<comment type="catalytic activity">
    <reaction evidence="1">
        <text>cytidine(1402) in 16S rRNA + S-adenosyl-L-methionine = N(4)-methylcytidine(1402) in 16S rRNA + S-adenosyl-L-homocysteine + H(+)</text>
        <dbReference type="Rhea" id="RHEA:42928"/>
        <dbReference type="Rhea" id="RHEA-COMP:10286"/>
        <dbReference type="Rhea" id="RHEA-COMP:10287"/>
        <dbReference type="ChEBI" id="CHEBI:15378"/>
        <dbReference type="ChEBI" id="CHEBI:57856"/>
        <dbReference type="ChEBI" id="CHEBI:59789"/>
        <dbReference type="ChEBI" id="CHEBI:74506"/>
        <dbReference type="ChEBI" id="CHEBI:82748"/>
        <dbReference type="EC" id="2.1.1.199"/>
    </reaction>
</comment>
<comment type="subcellular location">
    <subcellularLocation>
        <location evidence="1">Cytoplasm</location>
    </subcellularLocation>
</comment>
<comment type="similarity">
    <text evidence="1">Belongs to the methyltransferase superfamily. RsmH family.</text>
</comment>